<evidence type="ECO:0000255" key="1">
    <source>
        <dbReference type="HAMAP-Rule" id="MF_00089"/>
    </source>
</evidence>
<feature type="chain" id="PRO_1000093246" description="Phosphomethylpyrimidine synthase">
    <location>
        <begin position="1"/>
        <end position="625"/>
    </location>
</feature>
<feature type="binding site" evidence="1">
    <location>
        <position position="230"/>
    </location>
    <ligand>
        <name>substrate</name>
    </ligand>
</feature>
<feature type="binding site" evidence="1">
    <location>
        <position position="259"/>
    </location>
    <ligand>
        <name>substrate</name>
    </ligand>
</feature>
<feature type="binding site" evidence="1">
    <location>
        <position position="288"/>
    </location>
    <ligand>
        <name>substrate</name>
    </ligand>
</feature>
<feature type="binding site" evidence="1">
    <location>
        <position position="324"/>
    </location>
    <ligand>
        <name>substrate</name>
    </ligand>
</feature>
<feature type="binding site" evidence="1">
    <location>
        <begin position="344"/>
        <end position="346"/>
    </location>
    <ligand>
        <name>substrate</name>
    </ligand>
</feature>
<feature type="binding site" evidence="1">
    <location>
        <begin position="385"/>
        <end position="388"/>
    </location>
    <ligand>
        <name>substrate</name>
    </ligand>
</feature>
<feature type="binding site" evidence="1">
    <location>
        <position position="424"/>
    </location>
    <ligand>
        <name>substrate</name>
    </ligand>
</feature>
<feature type="binding site" evidence="1">
    <location>
        <position position="428"/>
    </location>
    <ligand>
        <name>Zn(2+)</name>
        <dbReference type="ChEBI" id="CHEBI:29105"/>
    </ligand>
</feature>
<feature type="binding site" evidence="1">
    <location>
        <position position="451"/>
    </location>
    <ligand>
        <name>substrate</name>
    </ligand>
</feature>
<feature type="binding site" evidence="1">
    <location>
        <position position="492"/>
    </location>
    <ligand>
        <name>Zn(2+)</name>
        <dbReference type="ChEBI" id="CHEBI:29105"/>
    </ligand>
</feature>
<feature type="binding site" evidence="1">
    <location>
        <position position="572"/>
    </location>
    <ligand>
        <name>[4Fe-4S] cluster</name>
        <dbReference type="ChEBI" id="CHEBI:49883"/>
        <note>4Fe-4S-S-AdoMet</note>
    </ligand>
</feature>
<feature type="binding site" evidence="1">
    <location>
        <position position="575"/>
    </location>
    <ligand>
        <name>[4Fe-4S] cluster</name>
        <dbReference type="ChEBI" id="CHEBI:49883"/>
        <note>4Fe-4S-S-AdoMet</note>
    </ligand>
</feature>
<feature type="binding site" evidence="1">
    <location>
        <position position="580"/>
    </location>
    <ligand>
        <name>[4Fe-4S] cluster</name>
        <dbReference type="ChEBI" id="CHEBI:49883"/>
        <note>4Fe-4S-S-AdoMet</note>
    </ligand>
</feature>
<accession>B0RP37</accession>
<keyword id="KW-0004">4Fe-4S</keyword>
<keyword id="KW-0408">Iron</keyword>
<keyword id="KW-0411">Iron-sulfur</keyword>
<keyword id="KW-0456">Lyase</keyword>
<keyword id="KW-0479">Metal-binding</keyword>
<keyword id="KW-0949">S-adenosyl-L-methionine</keyword>
<keyword id="KW-0784">Thiamine biosynthesis</keyword>
<keyword id="KW-0862">Zinc</keyword>
<sequence length="625" mass="69174">MNAAPTVLLQQTQTLSAAVTQPIPGSRKIFVQGSRADLQVPMREIVLTRTPTLFGGQDNPPLSVYDTSGPYTDPQAAIDLAAGLAPLRADWIAERGDTLPLEALSSSFGRGREHDARLDAVRFPSRRLPRVARSGANVTQMHYARRGIITPEMEFVAIRENQRLEAVTDAVLRKQHPGEAFGAAIQQRITPEFVREEIARGRAILPNNINHPESEPMIIGRNFLTKINANIGNSAVSSGIAEEVEKLVWSIRWGGDTVMDLSTGKHIHETRDWIIRNSPVPIGTVPIYQALEKVDGRAEELTWEIFRDTLIEQAEQGVDYFTIHAGVLLRYVPLTARRVTGIVSRGGSILAKWCLAHHKENFLYTHFEDICEIMKAYDVAFSLGDGLRPGCIADANDAAQFGELETLGELTKLAWKHDVQTMIEGPGHVPMQLIKENMDKQLRECGEAPFYTLGPLTTDIAPGYDHITSAIGAAMIGWFGTAMLCYVTPKEHLGLPNRQDVRDGIMAYKIAAHAADLAKGHPGVQVRDNALSKARFEFRWDDQFHLGLDPEKAKEFHDETLPKDAHKLAHFCSMCGPHFCSMKITQDVRDYAAEHGISEDHALEAGMQEKSGEFVAQGAQVYRAS</sequence>
<name>THIC_XANCB</name>
<proteinExistence type="inferred from homology"/>
<organism>
    <name type="scientific">Xanthomonas campestris pv. campestris (strain B100)</name>
    <dbReference type="NCBI Taxonomy" id="509169"/>
    <lineage>
        <taxon>Bacteria</taxon>
        <taxon>Pseudomonadati</taxon>
        <taxon>Pseudomonadota</taxon>
        <taxon>Gammaproteobacteria</taxon>
        <taxon>Lysobacterales</taxon>
        <taxon>Lysobacteraceae</taxon>
        <taxon>Xanthomonas</taxon>
    </lineage>
</organism>
<dbReference type="EC" id="4.1.99.17" evidence="1"/>
<dbReference type="EMBL" id="AM920689">
    <property type="protein sequence ID" value="CAP50222.1"/>
    <property type="molecule type" value="Genomic_DNA"/>
</dbReference>
<dbReference type="SMR" id="B0RP37"/>
<dbReference type="KEGG" id="xca:xcc-b100_0879"/>
<dbReference type="HOGENOM" id="CLU_013181_2_1_6"/>
<dbReference type="UniPathway" id="UPA00060"/>
<dbReference type="Proteomes" id="UP000001188">
    <property type="component" value="Chromosome"/>
</dbReference>
<dbReference type="GO" id="GO:0005829">
    <property type="term" value="C:cytosol"/>
    <property type="evidence" value="ECO:0007669"/>
    <property type="project" value="TreeGrafter"/>
</dbReference>
<dbReference type="GO" id="GO:0051539">
    <property type="term" value="F:4 iron, 4 sulfur cluster binding"/>
    <property type="evidence" value="ECO:0007669"/>
    <property type="project" value="UniProtKB-KW"/>
</dbReference>
<dbReference type="GO" id="GO:0016830">
    <property type="term" value="F:carbon-carbon lyase activity"/>
    <property type="evidence" value="ECO:0007669"/>
    <property type="project" value="InterPro"/>
</dbReference>
<dbReference type="GO" id="GO:0008270">
    <property type="term" value="F:zinc ion binding"/>
    <property type="evidence" value="ECO:0007669"/>
    <property type="project" value="UniProtKB-UniRule"/>
</dbReference>
<dbReference type="GO" id="GO:0009228">
    <property type="term" value="P:thiamine biosynthetic process"/>
    <property type="evidence" value="ECO:0007669"/>
    <property type="project" value="UniProtKB-KW"/>
</dbReference>
<dbReference type="GO" id="GO:0009229">
    <property type="term" value="P:thiamine diphosphate biosynthetic process"/>
    <property type="evidence" value="ECO:0007669"/>
    <property type="project" value="UniProtKB-UniRule"/>
</dbReference>
<dbReference type="FunFam" id="3.20.20.540:FF:000001">
    <property type="entry name" value="Phosphomethylpyrimidine synthase"/>
    <property type="match status" value="1"/>
</dbReference>
<dbReference type="Gene3D" id="6.10.250.620">
    <property type="match status" value="1"/>
</dbReference>
<dbReference type="Gene3D" id="3.20.20.540">
    <property type="entry name" value="Radical SAM ThiC family, central domain"/>
    <property type="match status" value="1"/>
</dbReference>
<dbReference type="HAMAP" id="MF_00089">
    <property type="entry name" value="ThiC"/>
    <property type="match status" value="1"/>
</dbReference>
<dbReference type="InterPro" id="IPR037509">
    <property type="entry name" value="ThiC"/>
</dbReference>
<dbReference type="InterPro" id="IPR025747">
    <property type="entry name" value="ThiC-associated_dom"/>
</dbReference>
<dbReference type="InterPro" id="IPR038521">
    <property type="entry name" value="ThiC/Bza_core_dom"/>
</dbReference>
<dbReference type="InterPro" id="IPR002817">
    <property type="entry name" value="ThiC/BzaA/B"/>
</dbReference>
<dbReference type="NCBIfam" id="NF006763">
    <property type="entry name" value="PRK09284.1"/>
    <property type="match status" value="1"/>
</dbReference>
<dbReference type="NCBIfam" id="NF009895">
    <property type="entry name" value="PRK13352.1"/>
    <property type="match status" value="1"/>
</dbReference>
<dbReference type="NCBIfam" id="TIGR00190">
    <property type="entry name" value="thiC"/>
    <property type="match status" value="1"/>
</dbReference>
<dbReference type="PANTHER" id="PTHR30557:SF1">
    <property type="entry name" value="PHOSPHOMETHYLPYRIMIDINE SYNTHASE, CHLOROPLASTIC"/>
    <property type="match status" value="1"/>
</dbReference>
<dbReference type="PANTHER" id="PTHR30557">
    <property type="entry name" value="THIAMINE BIOSYNTHESIS PROTEIN THIC"/>
    <property type="match status" value="1"/>
</dbReference>
<dbReference type="Pfam" id="PF13667">
    <property type="entry name" value="ThiC-associated"/>
    <property type="match status" value="1"/>
</dbReference>
<dbReference type="Pfam" id="PF01964">
    <property type="entry name" value="ThiC_Rad_SAM"/>
    <property type="match status" value="1"/>
</dbReference>
<dbReference type="SFLD" id="SFLDF00407">
    <property type="entry name" value="phosphomethylpyrimidine_syntha"/>
    <property type="match status" value="1"/>
</dbReference>
<dbReference type="SFLD" id="SFLDG01114">
    <property type="entry name" value="phosphomethylpyrimidine_syntha"/>
    <property type="match status" value="1"/>
</dbReference>
<dbReference type="SFLD" id="SFLDS00113">
    <property type="entry name" value="Radical_SAM_Phosphomethylpyrim"/>
    <property type="match status" value="1"/>
</dbReference>
<gene>
    <name evidence="1" type="primary">thiC</name>
    <name type="ordered locus">xcc-b100_0879</name>
</gene>
<protein>
    <recommendedName>
        <fullName evidence="1">Phosphomethylpyrimidine synthase</fullName>
        <ecNumber evidence="1">4.1.99.17</ecNumber>
    </recommendedName>
    <alternativeName>
        <fullName evidence="1">Hydroxymethylpyrimidine phosphate synthase</fullName>
        <shortName evidence="1">HMP-P synthase</shortName>
        <shortName evidence="1">HMP-phosphate synthase</shortName>
        <shortName evidence="1">HMPP synthase</shortName>
    </alternativeName>
    <alternativeName>
        <fullName evidence="1">Thiamine biosynthesis protein ThiC</fullName>
    </alternativeName>
</protein>
<comment type="function">
    <text evidence="1">Catalyzes the synthesis of the hydroxymethylpyrimidine phosphate (HMP-P) moiety of thiamine from aminoimidazole ribotide (AIR) in a radical S-adenosyl-L-methionine (SAM)-dependent reaction.</text>
</comment>
<comment type="catalytic activity">
    <reaction evidence="1">
        <text>5-amino-1-(5-phospho-beta-D-ribosyl)imidazole + S-adenosyl-L-methionine = 4-amino-2-methyl-5-(phosphooxymethyl)pyrimidine + CO + 5'-deoxyadenosine + formate + L-methionine + 3 H(+)</text>
        <dbReference type="Rhea" id="RHEA:24840"/>
        <dbReference type="ChEBI" id="CHEBI:15378"/>
        <dbReference type="ChEBI" id="CHEBI:15740"/>
        <dbReference type="ChEBI" id="CHEBI:17245"/>
        <dbReference type="ChEBI" id="CHEBI:17319"/>
        <dbReference type="ChEBI" id="CHEBI:57844"/>
        <dbReference type="ChEBI" id="CHEBI:58354"/>
        <dbReference type="ChEBI" id="CHEBI:59789"/>
        <dbReference type="ChEBI" id="CHEBI:137981"/>
        <dbReference type="EC" id="4.1.99.17"/>
    </reaction>
</comment>
<comment type="cofactor">
    <cofactor evidence="1">
        <name>[4Fe-4S] cluster</name>
        <dbReference type="ChEBI" id="CHEBI:49883"/>
    </cofactor>
    <text evidence="1">Binds 1 [4Fe-4S] cluster per subunit. The cluster is coordinated with 3 cysteines and an exchangeable S-adenosyl-L-methionine.</text>
</comment>
<comment type="pathway">
    <text evidence="1">Cofactor biosynthesis; thiamine diphosphate biosynthesis.</text>
</comment>
<comment type="subunit">
    <text evidence="1">Homodimer.</text>
</comment>
<comment type="similarity">
    <text evidence="1">Belongs to the ThiC family.</text>
</comment>
<reference key="1">
    <citation type="journal article" date="2008" name="J. Biotechnol.">
        <title>The genome of Xanthomonas campestris pv. campestris B100 and its use for the reconstruction of metabolic pathways involved in xanthan biosynthesis.</title>
        <authorList>
            <person name="Vorhoelter F.-J."/>
            <person name="Schneiker S."/>
            <person name="Goesmann A."/>
            <person name="Krause L."/>
            <person name="Bekel T."/>
            <person name="Kaiser O."/>
            <person name="Linke B."/>
            <person name="Patschkowski T."/>
            <person name="Rueckert C."/>
            <person name="Schmid J."/>
            <person name="Sidhu V.K."/>
            <person name="Sieber V."/>
            <person name="Tauch A."/>
            <person name="Watt S.A."/>
            <person name="Weisshaar B."/>
            <person name="Becker A."/>
            <person name="Niehaus K."/>
            <person name="Puehler A."/>
        </authorList>
    </citation>
    <scope>NUCLEOTIDE SEQUENCE [LARGE SCALE GENOMIC DNA]</scope>
    <source>
        <strain>B100</strain>
    </source>
</reference>